<organism>
    <name type="scientific">Shigella boydii serotype 18 (strain CDC 3083-94 / BS512)</name>
    <dbReference type="NCBI Taxonomy" id="344609"/>
    <lineage>
        <taxon>Bacteria</taxon>
        <taxon>Pseudomonadati</taxon>
        <taxon>Pseudomonadota</taxon>
        <taxon>Gammaproteobacteria</taxon>
        <taxon>Enterobacterales</taxon>
        <taxon>Enterobacteriaceae</taxon>
        <taxon>Shigella</taxon>
    </lineage>
</organism>
<evidence type="ECO:0000255" key="1">
    <source>
        <dbReference type="HAMAP-Rule" id="MF_01044"/>
    </source>
</evidence>
<reference key="1">
    <citation type="submission" date="2008-05" db="EMBL/GenBank/DDBJ databases">
        <title>Complete sequence of Shigella boydii serotype 18 strain BS512.</title>
        <authorList>
            <person name="Rasko D.A."/>
            <person name="Rosovitz M."/>
            <person name="Maurelli A.T."/>
            <person name="Myers G."/>
            <person name="Seshadri R."/>
            <person name="Cer R."/>
            <person name="Jiang L."/>
            <person name="Ravel J."/>
            <person name="Sebastian Y."/>
        </authorList>
    </citation>
    <scope>NUCLEOTIDE SEQUENCE [LARGE SCALE GENOMIC DNA]</scope>
    <source>
        <strain>CDC 3083-94 / BS512</strain>
    </source>
</reference>
<sequence>MTNSNRIKLTWISFLSYALTGALVIVTGMVMGNIADYFNLPVSSMSNTFTFLNAGILISIFLNAWLMEIVPLKTQLRFGFLLMVLAVAGLMFSHSLALFSTAMFILGVVSGITMSIGTFLITQMYEGRQRGSRLLFTDSFFSMAGMIFPMIAAFLLAHSIEWYWVYACIGLVYVAIFILTFGCEFPALGKHAPKTDAPVEKEKWGIGVLFLSVAALCYILGQLGFISWVPEYAKGLGMSLNDAGTLVSNFWMSYMVGMWAFSFILRFFDLQRILTVLAGLAAILMYVFNTGTPAHMAWSILALGFFSSAIYTTIITLGSQQTKVPSPKLVNFVLTCGTIGTMLTFVVTGPIVEHSGPQAALLTANGLYAVVFVMCFLLGFVSRHRQHNTLTSH</sequence>
<comment type="subcellular location">
    <subcellularLocation>
        <location evidence="1">Cell inner membrane</location>
        <topology evidence="1">Multi-pass membrane protein</topology>
    </subcellularLocation>
</comment>
<comment type="similarity">
    <text evidence="1">Belongs to the major facilitator superfamily. TsgA family.</text>
</comment>
<proteinExistence type="inferred from homology"/>
<feature type="chain" id="PRO_1000136153" description="Protein TsgA">
    <location>
        <begin position="1"/>
        <end position="393"/>
    </location>
</feature>
<feature type="transmembrane region" description="Helical" evidence="1">
    <location>
        <begin position="11"/>
        <end position="31"/>
    </location>
</feature>
<feature type="transmembrane region" description="Helical" evidence="1">
    <location>
        <begin position="51"/>
        <end position="71"/>
    </location>
</feature>
<feature type="transmembrane region" description="Helical" evidence="1">
    <location>
        <begin position="78"/>
        <end position="98"/>
    </location>
</feature>
<feature type="transmembrane region" description="Helical" evidence="1">
    <location>
        <begin position="101"/>
        <end position="121"/>
    </location>
</feature>
<feature type="transmembrane region" description="Helical" evidence="1">
    <location>
        <begin position="140"/>
        <end position="160"/>
    </location>
</feature>
<feature type="transmembrane region" description="Helical" evidence="1">
    <location>
        <begin position="162"/>
        <end position="182"/>
    </location>
</feature>
<feature type="transmembrane region" description="Helical" evidence="1">
    <location>
        <begin position="206"/>
        <end position="226"/>
    </location>
</feature>
<feature type="transmembrane region" description="Helical" evidence="1">
    <location>
        <begin position="245"/>
        <end position="265"/>
    </location>
</feature>
<feature type="transmembrane region" description="Helical" evidence="1">
    <location>
        <begin position="273"/>
        <end position="293"/>
    </location>
</feature>
<feature type="transmembrane region" description="Helical" evidence="1">
    <location>
        <begin position="297"/>
        <end position="317"/>
    </location>
</feature>
<feature type="transmembrane region" description="Helical" evidence="1">
    <location>
        <begin position="332"/>
        <end position="352"/>
    </location>
</feature>
<feature type="transmembrane region" description="Helical" evidence="1">
    <location>
        <begin position="361"/>
        <end position="381"/>
    </location>
</feature>
<dbReference type="EMBL" id="CP001063">
    <property type="protein sequence ID" value="ACD10458.1"/>
    <property type="molecule type" value="Genomic_DNA"/>
</dbReference>
<dbReference type="RefSeq" id="WP_000185256.1">
    <property type="nucleotide sequence ID" value="NC_010658.1"/>
</dbReference>
<dbReference type="SMR" id="B2U3H0"/>
<dbReference type="STRING" id="344609.SbBS512_E3740"/>
<dbReference type="KEGG" id="sbc:SbBS512_E3740"/>
<dbReference type="HOGENOM" id="CLU_056916_0_0_6"/>
<dbReference type="Proteomes" id="UP000001030">
    <property type="component" value="Chromosome"/>
</dbReference>
<dbReference type="GO" id="GO:0005886">
    <property type="term" value="C:plasma membrane"/>
    <property type="evidence" value="ECO:0007669"/>
    <property type="project" value="UniProtKB-SubCell"/>
</dbReference>
<dbReference type="GO" id="GO:0022857">
    <property type="term" value="F:transmembrane transporter activity"/>
    <property type="evidence" value="ECO:0007669"/>
    <property type="project" value="InterPro"/>
</dbReference>
<dbReference type="CDD" id="cd17333">
    <property type="entry name" value="MFS_FucP_MFSD4_like"/>
    <property type="match status" value="1"/>
</dbReference>
<dbReference type="FunFam" id="1.20.1250.20:FF:000032">
    <property type="entry name" value="Protein TsgA"/>
    <property type="match status" value="1"/>
</dbReference>
<dbReference type="FunFam" id="1.20.1250.20:FF:000052">
    <property type="entry name" value="Protein TsgA"/>
    <property type="match status" value="1"/>
</dbReference>
<dbReference type="Gene3D" id="1.20.1250.20">
    <property type="entry name" value="MFS general substrate transporter like domains"/>
    <property type="match status" value="2"/>
</dbReference>
<dbReference type="HAMAP" id="MF_01044">
    <property type="entry name" value="MFS_TsgA"/>
    <property type="match status" value="1"/>
</dbReference>
<dbReference type="InterPro" id="IPR011701">
    <property type="entry name" value="MFS"/>
</dbReference>
<dbReference type="InterPro" id="IPR020846">
    <property type="entry name" value="MFS_dom"/>
</dbReference>
<dbReference type="InterPro" id="IPR036259">
    <property type="entry name" value="MFS_trans_sf"/>
</dbReference>
<dbReference type="InterPro" id="IPR023528">
    <property type="entry name" value="MFS_TsgA"/>
</dbReference>
<dbReference type="InterPro" id="IPR050375">
    <property type="entry name" value="MFS_TsgA-like"/>
</dbReference>
<dbReference type="NCBIfam" id="NF002982">
    <property type="entry name" value="PRK03699.1"/>
    <property type="match status" value="1"/>
</dbReference>
<dbReference type="PANTHER" id="PTHR43702">
    <property type="entry name" value="L-FUCOSE-PROTON SYMPORTER"/>
    <property type="match status" value="1"/>
</dbReference>
<dbReference type="PANTHER" id="PTHR43702:SF3">
    <property type="entry name" value="PROTEIN TSGA"/>
    <property type="match status" value="1"/>
</dbReference>
<dbReference type="Pfam" id="PF07690">
    <property type="entry name" value="MFS_1"/>
    <property type="match status" value="1"/>
</dbReference>
<dbReference type="SUPFAM" id="SSF103473">
    <property type="entry name" value="MFS general substrate transporter"/>
    <property type="match status" value="1"/>
</dbReference>
<dbReference type="PROSITE" id="PS50850">
    <property type="entry name" value="MFS"/>
    <property type="match status" value="1"/>
</dbReference>
<protein>
    <recommendedName>
        <fullName evidence="1">Protein TsgA</fullName>
    </recommendedName>
</protein>
<accession>B2U3H0</accession>
<name>TSGA_SHIB3</name>
<gene>
    <name evidence="1" type="primary">tsgA</name>
    <name type="ordered locus">SbBS512_E3740</name>
</gene>
<keyword id="KW-0997">Cell inner membrane</keyword>
<keyword id="KW-1003">Cell membrane</keyword>
<keyword id="KW-0472">Membrane</keyword>
<keyword id="KW-1185">Reference proteome</keyword>
<keyword id="KW-0812">Transmembrane</keyword>
<keyword id="KW-1133">Transmembrane helix</keyword>